<protein>
    <recommendedName>
        <fullName>Centromere protein L</fullName>
        <shortName>CENP-L</shortName>
    </recommendedName>
</protein>
<organism>
    <name type="scientific">Xenopus tropicalis</name>
    <name type="common">Western clawed frog</name>
    <name type="synonym">Silurana tropicalis</name>
    <dbReference type="NCBI Taxonomy" id="8364"/>
    <lineage>
        <taxon>Eukaryota</taxon>
        <taxon>Metazoa</taxon>
        <taxon>Chordata</taxon>
        <taxon>Craniata</taxon>
        <taxon>Vertebrata</taxon>
        <taxon>Euteleostomi</taxon>
        <taxon>Amphibia</taxon>
        <taxon>Batrachia</taxon>
        <taxon>Anura</taxon>
        <taxon>Pipoidea</taxon>
        <taxon>Pipidae</taxon>
        <taxon>Xenopodinae</taxon>
        <taxon>Xenopus</taxon>
        <taxon>Silurana</taxon>
    </lineage>
</organism>
<proteinExistence type="evidence at transcript level"/>
<gene>
    <name type="primary">cenpl</name>
    <name type="ORF">TTpA009f13.1</name>
</gene>
<name>CENPL_XENTR</name>
<dbReference type="EMBL" id="CR760804">
    <property type="protein sequence ID" value="CAJ82931.1"/>
    <property type="molecule type" value="mRNA"/>
</dbReference>
<dbReference type="RefSeq" id="NP_001037910.1">
    <property type="nucleotide sequence ID" value="NM_001044445.1"/>
</dbReference>
<dbReference type="RefSeq" id="XP_012816691.2">
    <property type="nucleotide sequence ID" value="XM_012961237.3"/>
</dbReference>
<dbReference type="SMR" id="Q28HN9"/>
<dbReference type="FunCoup" id="Q28HN9">
    <property type="interactions" value="2802"/>
</dbReference>
<dbReference type="STRING" id="8364.ENSXETP00000044002"/>
<dbReference type="PaxDb" id="8364-ENSXETP00000043247"/>
<dbReference type="GeneID" id="733519"/>
<dbReference type="KEGG" id="xtr:733519"/>
<dbReference type="AGR" id="Xenbase:XB-GENE-5736186"/>
<dbReference type="CTD" id="91687"/>
<dbReference type="Xenbase" id="XB-GENE-5736186">
    <property type="gene designation" value="cenpl"/>
</dbReference>
<dbReference type="eggNOG" id="ENOG502QS38">
    <property type="taxonomic scope" value="Eukaryota"/>
</dbReference>
<dbReference type="InParanoid" id="Q28HN9"/>
<dbReference type="OMA" id="TACKMDQ"/>
<dbReference type="OrthoDB" id="8864979at2759"/>
<dbReference type="Reactome" id="R-XTR-141444">
    <property type="pathway name" value="Amplification of signal from unattached kinetochores via a MAD2 inhibitory signal"/>
</dbReference>
<dbReference type="Reactome" id="R-XTR-2467813">
    <property type="pathway name" value="Separation of Sister Chromatids"/>
</dbReference>
<dbReference type="Reactome" id="R-XTR-2500257">
    <property type="pathway name" value="Resolution of Sister Chromatid Cohesion"/>
</dbReference>
<dbReference type="Reactome" id="R-XTR-5663220">
    <property type="pathway name" value="RHO GTPases Activate Formins"/>
</dbReference>
<dbReference type="Reactome" id="R-XTR-606279">
    <property type="pathway name" value="Deposition of new CENPA-containing nucleosomes at the centromere"/>
</dbReference>
<dbReference type="Reactome" id="R-XTR-68877">
    <property type="pathway name" value="Mitotic Prometaphase"/>
</dbReference>
<dbReference type="Reactome" id="R-XTR-9648025">
    <property type="pathway name" value="EML4 and NUDC in mitotic spindle formation"/>
</dbReference>
<dbReference type="Proteomes" id="UP000008143">
    <property type="component" value="Chromosome 4"/>
</dbReference>
<dbReference type="GO" id="GO:0000775">
    <property type="term" value="C:chromosome, centromeric region"/>
    <property type="evidence" value="ECO:0007669"/>
    <property type="project" value="UniProtKB-SubCell"/>
</dbReference>
<dbReference type="GO" id="GO:0005634">
    <property type="term" value="C:nucleus"/>
    <property type="evidence" value="ECO:0007669"/>
    <property type="project" value="UniProtKB-SubCell"/>
</dbReference>
<dbReference type="InterPro" id="IPR025204">
    <property type="entry name" value="CENP-L"/>
</dbReference>
<dbReference type="PANTHER" id="PTHR31740">
    <property type="entry name" value="CENTROMERE PROTEIN L"/>
    <property type="match status" value="1"/>
</dbReference>
<dbReference type="PANTHER" id="PTHR31740:SF2">
    <property type="entry name" value="CENTROMERE PROTEIN L"/>
    <property type="match status" value="1"/>
</dbReference>
<dbReference type="Pfam" id="PF13092">
    <property type="entry name" value="CENP-L"/>
    <property type="match status" value="1"/>
</dbReference>
<accession>Q28HN9</accession>
<evidence type="ECO:0000250" key="1"/>
<evidence type="ECO:0000305" key="2"/>
<keyword id="KW-0137">Centromere</keyword>
<keyword id="KW-0158">Chromosome</keyword>
<keyword id="KW-0539">Nucleus</keyword>
<keyword id="KW-1185">Reference proteome</keyword>
<comment type="function">
    <text evidence="1">Probable component of a centromeric complex involved in assembly of kinetochore proteins, mitotic progression and chromosome segregation.</text>
</comment>
<comment type="subcellular location">
    <subcellularLocation>
        <location evidence="1">Nucleus</location>
    </subcellularLocation>
    <subcellularLocation>
        <location evidence="1">Chromosome</location>
        <location evidence="1">Centromere</location>
    </subcellularLocation>
    <text evidence="1">Localizes exclusively in the centromeres.</text>
</comment>
<comment type="similarity">
    <text evidence="2">Belongs to the CENP-L/IML3 family.</text>
</comment>
<reference key="1">
    <citation type="submission" date="2006-06" db="EMBL/GenBank/DDBJ databases">
        <authorList>
            <consortium name="Sanger Xenopus tropicalis EST/cDNA project"/>
        </authorList>
    </citation>
    <scope>NUCLEOTIDE SEQUENCE [LARGE SCALE MRNA]</scope>
    <source>
        <tissue>Tadpole</tissue>
    </source>
</reference>
<feature type="chain" id="PRO_0000249488" description="Centromere protein L">
    <location>
        <begin position="1"/>
        <end position="348"/>
    </location>
</feature>
<sequence>MQSPTNGVSTPKDFSSARRSIQFQNTGFPQIGLASARRHTPFHHAPSKRRIPQTSPLSETVDPLKIALLLSKQWTLYSVTPMHKFSYTNLKEYARLLSAHICAEKQKGLAVEVGTELNVKATFSPLPGLKGREQDPGSILIQVLAKPQFSAAGAQDRIVWSGCFCCTFADEDTLDLLTSETLLCLPLFLVNGAEALTAMVGTWFQKAFDCSFSNLPISSRDLAWMAAMWTGYEAHEHITATEFIFSVPIEPHMDISYAIHPEDIKALWSNIHKGQDEVLAEEVDLLFQCLYTHFFRHFKIHLSATHLVKVSTSVASAHCDGKVKFLSKEYLLQVLGYLTELAINNIQY</sequence>